<name>Y539_MYCTU</name>
<protein>
    <recommendedName>
        <fullName>Uncharacterized glycosyltransferase Rv0539</fullName>
        <ecNumber>2.4.-.-</ecNumber>
    </recommendedName>
</protein>
<keyword id="KW-0328">Glycosyltransferase</keyword>
<keyword id="KW-1185">Reference proteome</keyword>
<keyword id="KW-0808">Transferase</keyword>
<evidence type="ECO:0000305" key="1"/>
<accession>P9WMY1</accession>
<accession>L0T6Z8</accession>
<accession>O06405</accession>
<accession>O32851</accession>
<accession>P0A597</accession>
<reference key="1">
    <citation type="journal article" date="1998" name="Nature">
        <title>Deciphering the biology of Mycobacterium tuberculosis from the complete genome sequence.</title>
        <authorList>
            <person name="Cole S.T."/>
            <person name="Brosch R."/>
            <person name="Parkhill J."/>
            <person name="Garnier T."/>
            <person name="Churcher C.M."/>
            <person name="Harris D.E."/>
            <person name="Gordon S.V."/>
            <person name="Eiglmeier K."/>
            <person name="Gas S."/>
            <person name="Barry C.E. III"/>
            <person name="Tekaia F."/>
            <person name="Badcock K."/>
            <person name="Basham D."/>
            <person name="Brown D."/>
            <person name="Chillingworth T."/>
            <person name="Connor R."/>
            <person name="Davies R.M."/>
            <person name="Devlin K."/>
            <person name="Feltwell T."/>
            <person name="Gentles S."/>
            <person name="Hamlin N."/>
            <person name="Holroyd S."/>
            <person name="Hornsby T."/>
            <person name="Jagels K."/>
            <person name="Krogh A."/>
            <person name="McLean J."/>
            <person name="Moule S."/>
            <person name="Murphy L.D."/>
            <person name="Oliver S."/>
            <person name="Osborne J."/>
            <person name="Quail M.A."/>
            <person name="Rajandream M.A."/>
            <person name="Rogers J."/>
            <person name="Rutter S."/>
            <person name="Seeger K."/>
            <person name="Skelton S."/>
            <person name="Squares S."/>
            <person name="Squares R."/>
            <person name="Sulston J.E."/>
            <person name="Taylor K."/>
            <person name="Whitehead S."/>
            <person name="Barrell B.G."/>
        </authorList>
    </citation>
    <scope>NUCLEOTIDE SEQUENCE [LARGE SCALE GENOMIC DNA]</scope>
    <source>
        <strain>ATCC 25618 / H37Rv</strain>
    </source>
</reference>
<reference key="2">
    <citation type="journal article" date="2011" name="Mol. Cell. Proteomics">
        <title>Proteogenomic analysis of Mycobacterium tuberculosis by high resolution mass spectrometry.</title>
        <authorList>
            <person name="Kelkar D.S."/>
            <person name="Kumar D."/>
            <person name="Kumar P."/>
            <person name="Balakrishnan L."/>
            <person name="Muthusamy B."/>
            <person name="Yadav A.K."/>
            <person name="Shrivastava P."/>
            <person name="Marimuthu A."/>
            <person name="Anand S."/>
            <person name="Sundaram H."/>
            <person name="Kingsbury R."/>
            <person name="Harsha H.C."/>
            <person name="Nair B."/>
            <person name="Prasad T.S."/>
            <person name="Chauhan D.S."/>
            <person name="Katoch K."/>
            <person name="Katoch V.M."/>
            <person name="Kumar P."/>
            <person name="Chaerkady R."/>
            <person name="Ramachandran S."/>
            <person name="Dash D."/>
            <person name="Pandey A."/>
        </authorList>
    </citation>
    <scope>IDENTIFICATION BY MASS SPECTROMETRY [LARGE SCALE ANALYSIS]</scope>
    <source>
        <strain>ATCC 25618 / H37Rv</strain>
    </source>
</reference>
<sequence length="218" mass="23117">MAGDAVTVVLPCLNEEESLPAVLAAIPAGYRALVVDNNSTDDTATVAARHGAQVVVEPRPGYGSAVHAGVLAATTPIVAVIDADGSMDAGDLPKLVAELDKGADLVTGRRRPVAGLHWPWVARVGTVVMSWRLRTRHRLPVHDIAPMRVARREALLDLGVVDRRSGYPLELLVRAAAAGWRVVELDVSYGPRTGGKSKVSGSLRGSIIAILDFWKVIS</sequence>
<gene>
    <name type="ordered locus">Rv0539</name>
    <name type="ORF">MTCY25D10.18</name>
</gene>
<dbReference type="EC" id="2.4.-.-"/>
<dbReference type="EMBL" id="AL123456">
    <property type="protein sequence ID" value="CCP43277.1"/>
    <property type="status" value="ALT_INIT"/>
    <property type="molecule type" value="Genomic_DNA"/>
</dbReference>
<dbReference type="PIR" id="F70546">
    <property type="entry name" value="F70546"/>
</dbReference>
<dbReference type="RefSeq" id="NP_215053.1">
    <property type="nucleotide sequence ID" value="NC_000962.3"/>
</dbReference>
<dbReference type="RefSeq" id="WP_003402875.1">
    <property type="nucleotide sequence ID" value="NC_000962.3"/>
</dbReference>
<dbReference type="RefSeq" id="WP_003898499.1">
    <property type="nucleotide sequence ID" value="NZ_NVQJ01000036.1"/>
</dbReference>
<dbReference type="SMR" id="P9WMY1"/>
<dbReference type="FunCoup" id="P9WMY1">
    <property type="interactions" value="273"/>
</dbReference>
<dbReference type="STRING" id="83332.Rv0539"/>
<dbReference type="PaxDb" id="83332-Rv0539"/>
<dbReference type="DNASU" id="887476"/>
<dbReference type="GeneID" id="887476"/>
<dbReference type="KEGG" id="mtu:Rv0539"/>
<dbReference type="PATRIC" id="fig|83332.12.peg.598"/>
<dbReference type="TubercuList" id="Rv0539"/>
<dbReference type="eggNOG" id="COG1215">
    <property type="taxonomic scope" value="Bacteria"/>
</dbReference>
<dbReference type="InParanoid" id="P9WMY1"/>
<dbReference type="OrthoDB" id="9797819at2"/>
<dbReference type="Proteomes" id="UP000001584">
    <property type="component" value="Chromosome"/>
</dbReference>
<dbReference type="GO" id="GO:0016757">
    <property type="term" value="F:glycosyltransferase activity"/>
    <property type="evidence" value="ECO:0007669"/>
    <property type="project" value="UniProtKB-KW"/>
</dbReference>
<dbReference type="CDD" id="cd04179">
    <property type="entry name" value="DPM_DPG-synthase_like"/>
    <property type="match status" value="1"/>
</dbReference>
<dbReference type="Gene3D" id="3.90.550.10">
    <property type="entry name" value="Spore Coat Polysaccharide Biosynthesis Protein SpsA, Chain A"/>
    <property type="match status" value="1"/>
</dbReference>
<dbReference type="InterPro" id="IPR001173">
    <property type="entry name" value="Glyco_trans_2-like"/>
</dbReference>
<dbReference type="InterPro" id="IPR050256">
    <property type="entry name" value="Glycosyltransferase_2"/>
</dbReference>
<dbReference type="InterPro" id="IPR029044">
    <property type="entry name" value="Nucleotide-diphossugar_trans"/>
</dbReference>
<dbReference type="PANTHER" id="PTHR48090:SF7">
    <property type="entry name" value="RFBJ PROTEIN"/>
    <property type="match status" value="1"/>
</dbReference>
<dbReference type="PANTHER" id="PTHR48090">
    <property type="entry name" value="UNDECAPRENYL-PHOSPHATE 4-DEOXY-4-FORMAMIDO-L-ARABINOSE TRANSFERASE-RELATED"/>
    <property type="match status" value="1"/>
</dbReference>
<dbReference type="Pfam" id="PF00535">
    <property type="entry name" value="Glycos_transf_2"/>
    <property type="match status" value="1"/>
</dbReference>
<dbReference type="SUPFAM" id="SSF53448">
    <property type="entry name" value="Nucleotide-diphospho-sugar transferases"/>
    <property type="match status" value="1"/>
</dbReference>
<organism>
    <name type="scientific">Mycobacterium tuberculosis (strain ATCC 25618 / H37Rv)</name>
    <dbReference type="NCBI Taxonomy" id="83332"/>
    <lineage>
        <taxon>Bacteria</taxon>
        <taxon>Bacillati</taxon>
        <taxon>Actinomycetota</taxon>
        <taxon>Actinomycetes</taxon>
        <taxon>Mycobacteriales</taxon>
        <taxon>Mycobacteriaceae</taxon>
        <taxon>Mycobacterium</taxon>
        <taxon>Mycobacterium tuberculosis complex</taxon>
    </lineage>
</organism>
<feature type="chain" id="PRO_0000059248" description="Uncharacterized glycosyltransferase Rv0539">
    <location>
        <begin position="1"/>
        <end position="218"/>
    </location>
</feature>
<proteinExistence type="evidence at protein level"/>
<comment type="similarity">
    <text evidence="1">Belongs to the glycosyltransferase 2 family.</text>
</comment>
<comment type="sequence caution" evidence="1">
    <conflict type="erroneous initiation">
        <sequence resource="EMBL-CDS" id="CCP43277"/>
    </conflict>
    <text>Truncated N-terminus.</text>
</comment>